<organism>
    <name type="scientific">Staphylococcus aureus (strain Newman)</name>
    <dbReference type="NCBI Taxonomy" id="426430"/>
    <lineage>
        <taxon>Bacteria</taxon>
        <taxon>Bacillati</taxon>
        <taxon>Bacillota</taxon>
        <taxon>Bacilli</taxon>
        <taxon>Bacillales</taxon>
        <taxon>Staphylococcaceae</taxon>
        <taxon>Staphylococcus</taxon>
    </lineage>
</organism>
<dbReference type="EC" id="3.4.21.-"/>
<dbReference type="EMBL" id="AP009351">
    <property type="protein sequence ID" value="BAF67977.1"/>
    <property type="molecule type" value="Genomic_DNA"/>
</dbReference>
<dbReference type="RefSeq" id="WP_001039447.1">
    <property type="nucleotide sequence ID" value="NZ_JBBIAE010000013.1"/>
</dbReference>
<dbReference type="SMR" id="A6QHZ5"/>
<dbReference type="MEROPS" id="S01.282"/>
<dbReference type="KEGG" id="sae:NWMN_1705"/>
<dbReference type="HOGENOM" id="CLU_073589_2_0_9"/>
<dbReference type="Proteomes" id="UP000006386">
    <property type="component" value="Chromosome"/>
</dbReference>
<dbReference type="GO" id="GO:0005576">
    <property type="term" value="C:extracellular region"/>
    <property type="evidence" value="ECO:0007669"/>
    <property type="project" value="UniProtKB-SubCell"/>
</dbReference>
<dbReference type="GO" id="GO:0004252">
    <property type="term" value="F:serine-type endopeptidase activity"/>
    <property type="evidence" value="ECO:0007669"/>
    <property type="project" value="InterPro"/>
</dbReference>
<dbReference type="GO" id="GO:0006508">
    <property type="term" value="P:proteolysis"/>
    <property type="evidence" value="ECO:0007669"/>
    <property type="project" value="UniProtKB-KW"/>
</dbReference>
<dbReference type="Gene3D" id="2.40.10.10">
    <property type="entry name" value="Trypsin-like serine proteases"/>
    <property type="match status" value="2"/>
</dbReference>
<dbReference type="InterPro" id="IPR009003">
    <property type="entry name" value="Peptidase_S1_PA"/>
</dbReference>
<dbReference type="InterPro" id="IPR043504">
    <property type="entry name" value="Peptidase_S1_PA_chymotrypsin"/>
</dbReference>
<dbReference type="InterPro" id="IPR008256">
    <property type="entry name" value="Peptidase_S1B"/>
</dbReference>
<dbReference type="InterPro" id="IPR008353">
    <property type="entry name" value="Peptidase_S1B_tx"/>
</dbReference>
<dbReference type="InterPro" id="IPR001254">
    <property type="entry name" value="Trypsin_dom"/>
</dbReference>
<dbReference type="InterPro" id="IPR028301">
    <property type="entry name" value="V8_his_AS"/>
</dbReference>
<dbReference type="PANTHER" id="PTHR43019:SF23">
    <property type="entry name" value="PROTEASE DO-LIKE 5, CHLOROPLASTIC"/>
    <property type="match status" value="1"/>
</dbReference>
<dbReference type="PANTHER" id="PTHR43019">
    <property type="entry name" value="SERINE ENDOPROTEASE DEGS"/>
    <property type="match status" value="1"/>
</dbReference>
<dbReference type="Pfam" id="PF00089">
    <property type="entry name" value="Trypsin"/>
    <property type="match status" value="1"/>
</dbReference>
<dbReference type="PRINTS" id="PR01774">
    <property type="entry name" value="EXFOLTOXIN"/>
</dbReference>
<dbReference type="PRINTS" id="PR00839">
    <property type="entry name" value="V8PROTEASE"/>
</dbReference>
<dbReference type="SUPFAM" id="SSF50494">
    <property type="entry name" value="Trypsin-like serine proteases"/>
    <property type="match status" value="1"/>
</dbReference>
<dbReference type="PROSITE" id="PS00672">
    <property type="entry name" value="V8_HIS"/>
    <property type="match status" value="1"/>
</dbReference>
<proteinExistence type="inferred from homology"/>
<comment type="function">
    <text evidence="1">Serine protease that cleaves specifically after the sequence Trp-Glu-Leu-Gln.</text>
</comment>
<comment type="subcellular location">
    <subcellularLocation>
        <location evidence="1">Secreted</location>
    </subcellularLocation>
</comment>
<comment type="similarity">
    <text evidence="3">Belongs to the peptidase S1B family.</text>
</comment>
<accession>A6QHZ5</accession>
<feature type="signal peptide" evidence="1">
    <location>
        <begin position="1"/>
        <end position="36"/>
    </location>
</feature>
<feature type="chain" id="PRO_0000359548" description="Serine protease SplB">
    <location>
        <begin position="37"/>
        <end position="240"/>
    </location>
</feature>
<feature type="active site" description="Charge relay system" evidence="2">
    <location>
        <position position="75"/>
    </location>
</feature>
<feature type="active site" description="Charge relay system" evidence="2">
    <location>
        <position position="113"/>
    </location>
</feature>
<feature type="active site" description="Charge relay system" evidence="2">
    <location>
        <position position="193"/>
    </location>
</feature>
<protein>
    <recommendedName>
        <fullName>Serine protease SplB</fullName>
        <ecNumber>3.4.21.-</ecNumber>
    </recommendedName>
</protein>
<name>SPLB_STAAE</name>
<sequence>MNKNVVIKSLAALTILTSVTGIGTTLVEEVQQTAKAENNVTKVKDTNIFPYTGVVAFKSATGFVVGKNTILTNKHVSKNYKVGDRITAHPNSDKGNGGIYSIKKIINYPGKEDVSVIQVEERAIERGPKGFNFNDNVTPFKYAAGAKAGERIKVIGYPHPYKNKYVLYESTGPVMSVEGSSIVYSAHTESGNSGSPVLNSNNELVGIHFASDVKNDDNRNAYGVYFTPEIKKFIAENIDK</sequence>
<evidence type="ECO:0000250" key="1"/>
<evidence type="ECO:0000250" key="2">
    <source>
        <dbReference type="UniProtKB" id="Q2FXC3"/>
    </source>
</evidence>
<evidence type="ECO:0000305" key="3"/>
<reference key="1">
    <citation type="journal article" date="2008" name="J. Bacteriol.">
        <title>Genome sequence of Staphylococcus aureus strain Newman and comparative analysis of staphylococcal genomes: polymorphism and evolution of two major pathogenicity islands.</title>
        <authorList>
            <person name="Baba T."/>
            <person name="Bae T."/>
            <person name="Schneewind O."/>
            <person name="Takeuchi F."/>
            <person name="Hiramatsu K."/>
        </authorList>
    </citation>
    <scope>NUCLEOTIDE SEQUENCE [LARGE SCALE GENOMIC DNA]</scope>
    <source>
        <strain>Newman</strain>
    </source>
</reference>
<keyword id="KW-0378">Hydrolase</keyword>
<keyword id="KW-0645">Protease</keyword>
<keyword id="KW-0964">Secreted</keyword>
<keyword id="KW-0720">Serine protease</keyword>
<keyword id="KW-0732">Signal</keyword>
<gene>
    <name type="primary">splB</name>
    <name type="ordered locus">NWMN_1705</name>
</gene>